<evidence type="ECO:0000255" key="1">
    <source>
        <dbReference type="HAMAP-Rule" id="MF_00183"/>
    </source>
</evidence>
<comment type="function">
    <text evidence="1">Catalyzes the NADPH-dependent rearrangement and reduction of 1-deoxy-D-xylulose-5-phosphate (DXP) to 2-C-methyl-D-erythritol 4-phosphate (MEP).</text>
</comment>
<comment type="catalytic activity">
    <reaction evidence="1">
        <text>2-C-methyl-D-erythritol 4-phosphate + NADP(+) = 1-deoxy-D-xylulose 5-phosphate + NADPH + H(+)</text>
        <dbReference type="Rhea" id="RHEA:13717"/>
        <dbReference type="ChEBI" id="CHEBI:15378"/>
        <dbReference type="ChEBI" id="CHEBI:57783"/>
        <dbReference type="ChEBI" id="CHEBI:57792"/>
        <dbReference type="ChEBI" id="CHEBI:58262"/>
        <dbReference type="ChEBI" id="CHEBI:58349"/>
        <dbReference type="EC" id="1.1.1.267"/>
    </reaction>
    <physiologicalReaction direction="right-to-left" evidence="1">
        <dbReference type="Rhea" id="RHEA:13719"/>
    </physiologicalReaction>
</comment>
<comment type="cofactor">
    <cofactor evidence="1">
        <name>Mg(2+)</name>
        <dbReference type="ChEBI" id="CHEBI:18420"/>
    </cofactor>
    <cofactor evidence="1">
        <name>Mn(2+)</name>
        <dbReference type="ChEBI" id="CHEBI:29035"/>
    </cofactor>
</comment>
<comment type="pathway">
    <text evidence="1">Isoprenoid biosynthesis; isopentenyl diphosphate biosynthesis via DXP pathway; isopentenyl diphosphate from 1-deoxy-D-xylulose 5-phosphate: step 1/6.</text>
</comment>
<comment type="similarity">
    <text evidence="1">Belongs to the DXR family.</text>
</comment>
<dbReference type="EC" id="1.1.1.267" evidence="1"/>
<dbReference type="EMBL" id="AP009510">
    <property type="protein sequence ID" value="BAG13892.1"/>
    <property type="molecule type" value="Genomic_DNA"/>
</dbReference>
<dbReference type="RefSeq" id="WP_015423418.1">
    <property type="nucleotide sequence ID" value="NC_020419.1"/>
</dbReference>
<dbReference type="SMR" id="B1H060"/>
<dbReference type="STRING" id="471821.TGRD_409"/>
<dbReference type="KEGG" id="eti:RSTT_449"/>
<dbReference type="KEGG" id="rsd:TGRD_409"/>
<dbReference type="PATRIC" id="fig|471821.5.peg.662"/>
<dbReference type="HOGENOM" id="CLU_035714_4_0_0"/>
<dbReference type="OrthoDB" id="9806546at2"/>
<dbReference type="UniPathway" id="UPA00056">
    <property type="reaction ID" value="UER00092"/>
</dbReference>
<dbReference type="Proteomes" id="UP000001691">
    <property type="component" value="Chromosome"/>
</dbReference>
<dbReference type="GO" id="GO:0030604">
    <property type="term" value="F:1-deoxy-D-xylulose-5-phosphate reductoisomerase activity"/>
    <property type="evidence" value="ECO:0007669"/>
    <property type="project" value="UniProtKB-UniRule"/>
</dbReference>
<dbReference type="GO" id="GO:0030145">
    <property type="term" value="F:manganese ion binding"/>
    <property type="evidence" value="ECO:0007669"/>
    <property type="project" value="TreeGrafter"/>
</dbReference>
<dbReference type="GO" id="GO:0070402">
    <property type="term" value="F:NADPH binding"/>
    <property type="evidence" value="ECO:0007669"/>
    <property type="project" value="InterPro"/>
</dbReference>
<dbReference type="GO" id="GO:0051484">
    <property type="term" value="P:isopentenyl diphosphate biosynthetic process, methylerythritol 4-phosphate pathway involved in terpenoid biosynthetic process"/>
    <property type="evidence" value="ECO:0007669"/>
    <property type="project" value="TreeGrafter"/>
</dbReference>
<dbReference type="FunFam" id="3.40.50.720:FF:000045">
    <property type="entry name" value="1-deoxy-D-xylulose 5-phosphate reductoisomerase"/>
    <property type="match status" value="1"/>
</dbReference>
<dbReference type="Gene3D" id="1.10.1740.10">
    <property type="match status" value="1"/>
</dbReference>
<dbReference type="Gene3D" id="3.40.50.720">
    <property type="entry name" value="NAD(P)-binding Rossmann-like Domain"/>
    <property type="match status" value="1"/>
</dbReference>
<dbReference type="HAMAP" id="MF_00183">
    <property type="entry name" value="DXP_reductoisom"/>
    <property type="match status" value="1"/>
</dbReference>
<dbReference type="InterPro" id="IPR003821">
    <property type="entry name" value="DXP_reductoisomerase"/>
</dbReference>
<dbReference type="InterPro" id="IPR013644">
    <property type="entry name" value="DXP_reductoisomerase_C"/>
</dbReference>
<dbReference type="InterPro" id="IPR013512">
    <property type="entry name" value="DXP_reductoisomerase_N"/>
</dbReference>
<dbReference type="InterPro" id="IPR026877">
    <property type="entry name" value="DXPR_C"/>
</dbReference>
<dbReference type="InterPro" id="IPR036169">
    <property type="entry name" value="DXPR_C_sf"/>
</dbReference>
<dbReference type="InterPro" id="IPR036291">
    <property type="entry name" value="NAD(P)-bd_dom_sf"/>
</dbReference>
<dbReference type="NCBIfam" id="TIGR00243">
    <property type="entry name" value="Dxr"/>
    <property type="match status" value="1"/>
</dbReference>
<dbReference type="NCBIfam" id="NF009114">
    <property type="entry name" value="PRK12464.1"/>
    <property type="match status" value="1"/>
</dbReference>
<dbReference type="PANTHER" id="PTHR30525">
    <property type="entry name" value="1-DEOXY-D-XYLULOSE 5-PHOSPHATE REDUCTOISOMERASE"/>
    <property type="match status" value="1"/>
</dbReference>
<dbReference type="PANTHER" id="PTHR30525:SF0">
    <property type="entry name" value="1-DEOXY-D-XYLULOSE 5-PHOSPHATE REDUCTOISOMERASE, CHLOROPLASTIC"/>
    <property type="match status" value="1"/>
</dbReference>
<dbReference type="Pfam" id="PF08436">
    <property type="entry name" value="DXP_redisom_C"/>
    <property type="match status" value="1"/>
</dbReference>
<dbReference type="Pfam" id="PF02670">
    <property type="entry name" value="DXP_reductoisom"/>
    <property type="match status" value="1"/>
</dbReference>
<dbReference type="Pfam" id="PF13288">
    <property type="entry name" value="DXPR_C"/>
    <property type="match status" value="1"/>
</dbReference>
<dbReference type="PIRSF" id="PIRSF006205">
    <property type="entry name" value="Dxp_reductismrs"/>
    <property type="match status" value="1"/>
</dbReference>
<dbReference type="SUPFAM" id="SSF69055">
    <property type="entry name" value="1-deoxy-D-xylulose-5-phosphate reductoisomerase, C-terminal domain"/>
    <property type="match status" value="1"/>
</dbReference>
<dbReference type="SUPFAM" id="SSF55347">
    <property type="entry name" value="Glyceraldehyde-3-phosphate dehydrogenase-like, C-terminal domain"/>
    <property type="match status" value="1"/>
</dbReference>
<dbReference type="SUPFAM" id="SSF51735">
    <property type="entry name" value="NAD(P)-binding Rossmann-fold domains"/>
    <property type="match status" value="1"/>
</dbReference>
<proteinExistence type="inferred from homology"/>
<gene>
    <name evidence="1" type="primary">dxr</name>
    <name type="ordered locus">TGRD_409</name>
</gene>
<protein>
    <recommendedName>
        <fullName evidence="1">1-deoxy-D-xylulose 5-phosphate reductoisomerase</fullName>
        <shortName evidence="1">DXP reductoisomerase</shortName>
        <ecNumber evidence="1">1.1.1.267</ecNumber>
    </recommendedName>
    <alternativeName>
        <fullName evidence="1">1-deoxyxylulose-5-phosphate reductoisomerase</fullName>
    </alternativeName>
    <alternativeName>
        <fullName evidence="1">2-C-methyl-D-erythritol 4-phosphate synthase</fullName>
    </alternativeName>
</protein>
<sequence>MKRITILGSSGSIGKQTLNIISKMKENVCIEGLAVGSNIKILKSQIKKFKPASVSVNSPAEAQNLKKWCISNNIKTDVYKGNTGLEKLTTMPKTDMILAAIIGAVGLKSIIAAIKAKKDIAIANKEAIVMAGSYIMKLAAENGVSVLPVDSEHSAIFQCCTDEKKSQIKRIILTASGGPFYKYDKDFSKITVEQALDHPTWKMGRKITVDSATLMNKGLEAIEASVLFGVSIDKVEIIIHPQSVVHSMVEYVDGSVIAQLSNPDMKLPIQYALTYPERLPSNIKPLNLIEINKLEFYNPDFNKFPCLSLAYYAAQKGYTVPAVMNAANEMAVASFLNKEIKFTDIAKIVGRTIKTHKISKSTSLDTFIEADYWARHYAEKLINEI</sequence>
<organism>
    <name type="scientific">Endomicrobium trichonymphae</name>
    <dbReference type="NCBI Taxonomy" id="1408204"/>
    <lineage>
        <taxon>Bacteria</taxon>
        <taxon>Pseudomonadati</taxon>
        <taxon>Elusimicrobiota</taxon>
        <taxon>Endomicrobiia</taxon>
        <taxon>Endomicrobiales</taxon>
        <taxon>Endomicrobiaceae</taxon>
        <taxon>Candidatus Endomicrobiellum</taxon>
    </lineage>
</organism>
<feature type="chain" id="PRO_1000098523" description="1-deoxy-D-xylulose 5-phosphate reductoisomerase">
    <location>
        <begin position="1"/>
        <end position="385"/>
    </location>
</feature>
<feature type="binding site" evidence="1">
    <location>
        <position position="10"/>
    </location>
    <ligand>
        <name>NADPH</name>
        <dbReference type="ChEBI" id="CHEBI:57783"/>
    </ligand>
</feature>
<feature type="binding site" evidence="1">
    <location>
        <position position="11"/>
    </location>
    <ligand>
        <name>NADPH</name>
        <dbReference type="ChEBI" id="CHEBI:57783"/>
    </ligand>
</feature>
<feature type="binding site" evidence="1">
    <location>
        <position position="12"/>
    </location>
    <ligand>
        <name>NADPH</name>
        <dbReference type="ChEBI" id="CHEBI:57783"/>
    </ligand>
</feature>
<feature type="binding site" evidence="1">
    <location>
        <position position="13"/>
    </location>
    <ligand>
        <name>NADPH</name>
        <dbReference type="ChEBI" id="CHEBI:57783"/>
    </ligand>
</feature>
<feature type="binding site" evidence="1">
    <location>
        <position position="36"/>
    </location>
    <ligand>
        <name>NADPH</name>
        <dbReference type="ChEBI" id="CHEBI:57783"/>
    </ligand>
</feature>
<feature type="binding site" evidence="1">
    <location>
        <position position="38"/>
    </location>
    <ligand>
        <name>NADPH</name>
        <dbReference type="ChEBI" id="CHEBI:57783"/>
    </ligand>
</feature>
<feature type="binding site" evidence="1">
    <location>
        <position position="124"/>
    </location>
    <ligand>
        <name>NADPH</name>
        <dbReference type="ChEBI" id="CHEBI:57783"/>
    </ligand>
</feature>
<feature type="binding site" evidence="1">
    <location>
        <position position="125"/>
    </location>
    <ligand>
        <name>1-deoxy-D-xylulose 5-phosphate</name>
        <dbReference type="ChEBI" id="CHEBI:57792"/>
    </ligand>
</feature>
<feature type="binding site" evidence="1">
    <location>
        <position position="126"/>
    </location>
    <ligand>
        <name>NADPH</name>
        <dbReference type="ChEBI" id="CHEBI:57783"/>
    </ligand>
</feature>
<feature type="binding site" evidence="1">
    <location>
        <position position="150"/>
    </location>
    <ligand>
        <name>Mn(2+)</name>
        <dbReference type="ChEBI" id="CHEBI:29035"/>
    </ligand>
</feature>
<feature type="binding site" evidence="1">
    <location>
        <position position="151"/>
    </location>
    <ligand>
        <name>1-deoxy-D-xylulose 5-phosphate</name>
        <dbReference type="ChEBI" id="CHEBI:57792"/>
    </ligand>
</feature>
<feature type="binding site" evidence="1">
    <location>
        <position position="152"/>
    </location>
    <ligand>
        <name>1-deoxy-D-xylulose 5-phosphate</name>
        <dbReference type="ChEBI" id="CHEBI:57792"/>
    </ligand>
</feature>
<feature type="binding site" evidence="1">
    <location>
        <position position="152"/>
    </location>
    <ligand>
        <name>Mn(2+)</name>
        <dbReference type="ChEBI" id="CHEBI:29035"/>
    </ligand>
</feature>
<feature type="binding site" evidence="1">
    <location>
        <position position="176"/>
    </location>
    <ligand>
        <name>1-deoxy-D-xylulose 5-phosphate</name>
        <dbReference type="ChEBI" id="CHEBI:57792"/>
    </ligand>
</feature>
<feature type="binding site" evidence="1">
    <location>
        <position position="198"/>
    </location>
    <ligand>
        <name>1-deoxy-D-xylulose 5-phosphate</name>
        <dbReference type="ChEBI" id="CHEBI:57792"/>
    </ligand>
</feature>
<feature type="binding site" evidence="1">
    <location>
        <position position="204"/>
    </location>
    <ligand>
        <name>NADPH</name>
        <dbReference type="ChEBI" id="CHEBI:57783"/>
    </ligand>
</feature>
<feature type="binding site" evidence="1">
    <location>
        <position position="211"/>
    </location>
    <ligand>
        <name>1-deoxy-D-xylulose 5-phosphate</name>
        <dbReference type="ChEBI" id="CHEBI:57792"/>
    </ligand>
</feature>
<feature type="binding site" evidence="1">
    <location>
        <position position="216"/>
    </location>
    <ligand>
        <name>1-deoxy-D-xylulose 5-phosphate</name>
        <dbReference type="ChEBI" id="CHEBI:57792"/>
    </ligand>
</feature>
<feature type="binding site" evidence="1">
    <location>
        <position position="217"/>
    </location>
    <ligand>
        <name>1-deoxy-D-xylulose 5-phosphate</name>
        <dbReference type="ChEBI" id="CHEBI:57792"/>
    </ligand>
</feature>
<feature type="binding site" evidence="1">
    <location>
        <position position="220"/>
    </location>
    <ligand>
        <name>1-deoxy-D-xylulose 5-phosphate</name>
        <dbReference type="ChEBI" id="CHEBI:57792"/>
    </ligand>
</feature>
<feature type="binding site" evidence="1">
    <location>
        <position position="220"/>
    </location>
    <ligand>
        <name>Mn(2+)</name>
        <dbReference type="ChEBI" id="CHEBI:29035"/>
    </ligand>
</feature>
<name>DXR_ENDTX</name>
<accession>B1H060</accession>
<reference key="1">
    <citation type="journal article" date="2008" name="Proc. Natl. Acad. Sci. U.S.A.">
        <title>Complete genome of the uncultured termite group 1 bacteria in a single host protist cell.</title>
        <authorList>
            <person name="Hongoh Y."/>
            <person name="Sharma V.K."/>
            <person name="Prakash T."/>
            <person name="Noda S."/>
            <person name="Taylor T.D."/>
            <person name="Kudo T."/>
            <person name="Sakaki Y."/>
            <person name="Toyoda A."/>
            <person name="Hattori M."/>
            <person name="Ohkuma M."/>
        </authorList>
    </citation>
    <scope>NUCLEOTIDE SEQUENCE [LARGE SCALE GENOMIC DNA]</scope>
</reference>
<keyword id="KW-0414">Isoprene biosynthesis</keyword>
<keyword id="KW-0464">Manganese</keyword>
<keyword id="KW-0479">Metal-binding</keyword>
<keyword id="KW-0521">NADP</keyword>
<keyword id="KW-0560">Oxidoreductase</keyword>